<keyword id="KW-0963">Cytoplasm</keyword>
<keyword id="KW-0210">Decarboxylase</keyword>
<keyword id="KW-0456">Lyase</keyword>
<keyword id="KW-0627">Porphyrin biosynthesis</keyword>
<keyword id="KW-1185">Reference proteome</keyword>
<gene>
    <name evidence="1" type="primary">hemE</name>
    <name type="ordered locus">lmo2212</name>
</gene>
<evidence type="ECO:0000255" key="1">
    <source>
        <dbReference type="HAMAP-Rule" id="MF_00218"/>
    </source>
</evidence>
<organism>
    <name type="scientific">Listeria monocytogenes serovar 1/2a (strain ATCC BAA-679 / EGD-e)</name>
    <dbReference type="NCBI Taxonomy" id="169963"/>
    <lineage>
        <taxon>Bacteria</taxon>
        <taxon>Bacillati</taxon>
        <taxon>Bacillota</taxon>
        <taxon>Bacilli</taxon>
        <taxon>Bacillales</taxon>
        <taxon>Listeriaceae</taxon>
        <taxon>Listeria</taxon>
    </lineage>
</organism>
<name>DCUP_LISMO</name>
<protein>
    <recommendedName>
        <fullName evidence="1">Uroporphyrinogen decarboxylase</fullName>
        <shortName evidence="1">UPD</shortName>
        <shortName evidence="1">URO-D</shortName>
        <ecNumber evidence="1">4.1.1.37</ecNumber>
    </recommendedName>
</protein>
<dbReference type="EC" id="4.1.1.37" evidence="1"/>
<dbReference type="EMBL" id="AL591982">
    <property type="protein sequence ID" value="CAD00290.1"/>
    <property type="molecule type" value="Genomic_DNA"/>
</dbReference>
<dbReference type="PIR" id="AD1351">
    <property type="entry name" value="AD1351"/>
</dbReference>
<dbReference type="RefSeq" id="NP_465736.1">
    <property type="nucleotide sequence ID" value="NC_003210.1"/>
</dbReference>
<dbReference type="RefSeq" id="WP_003731891.1">
    <property type="nucleotide sequence ID" value="NZ_CP149495.1"/>
</dbReference>
<dbReference type="SMR" id="Q8Y564"/>
<dbReference type="STRING" id="169963.gene:17594903"/>
<dbReference type="PaxDb" id="169963-lmo2212"/>
<dbReference type="EnsemblBacteria" id="CAD00290">
    <property type="protein sequence ID" value="CAD00290"/>
    <property type="gene ID" value="CAD00290"/>
</dbReference>
<dbReference type="GeneID" id="984388"/>
<dbReference type="KEGG" id="lmo:lmo2212"/>
<dbReference type="PATRIC" id="fig|169963.11.peg.2264"/>
<dbReference type="eggNOG" id="COG0407">
    <property type="taxonomic scope" value="Bacteria"/>
</dbReference>
<dbReference type="HOGENOM" id="CLU_040933_0_1_9"/>
<dbReference type="OrthoDB" id="9806656at2"/>
<dbReference type="PhylomeDB" id="Q8Y564"/>
<dbReference type="BioCyc" id="LMON169963:LMO2212-MONOMER"/>
<dbReference type="UniPathway" id="UPA00251">
    <property type="reaction ID" value="UER00321"/>
</dbReference>
<dbReference type="Proteomes" id="UP000000817">
    <property type="component" value="Chromosome"/>
</dbReference>
<dbReference type="GO" id="GO:0005829">
    <property type="term" value="C:cytosol"/>
    <property type="evidence" value="ECO:0000318"/>
    <property type="project" value="GO_Central"/>
</dbReference>
<dbReference type="GO" id="GO:0004853">
    <property type="term" value="F:uroporphyrinogen decarboxylase activity"/>
    <property type="evidence" value="ECO:0000318"/>
    <property type="project" value="GO_Central"/>
</dbReference>
<dbReference type="GO" id="GO:0006783">
    <property type="term" value="P:heme biosynthetic process"/>
    <property type="evidence" value="ECO:0000318"/>
    <property type="project" value="GO_Central"/>
</dbReference>
<dbReference type="GO" id="GO:0006782">
    <property type="term" value="P:protoporphyrinogen IX biosynthetic process"/>
    <property type="evidence" value="ECO:0007669"/>
    <property type="project" value="UniProtKB-UniRule"/>
</dbReference>
<dbReference type="CDD" id="cd00717">
    <property type="entry name" value="URO-D"/>
    <property type="match status" value="1"/>
</dbReference>
<dbReference type="FunFam" id="3.20.20.210:FF:000005">
    <property type="entry name" value="Uroporphyrinogen decarboxylase"/>
    <property type="match status" value="1"/>
</dbReference>
<dbReference type="Gene3D" id="3.20.20.210">
    <property type="match status" value="1"/>
</dbReference>
<dbReference type="HAMAP" id="MF_00218">
    <property type="entry name" value="URO_D"/>
    <property type="match status" value="1"/>
</dbReference>
<dbReference type="InterPro" id="IPR038071">
    <property type="entry name" value="UROD/MetE-like_sf"/>
</dbReference>
<dbReference type="InterPro" id="IPR006361">
    <property type="entry name" value="Uroporphyrinogen_deCO2ase_HemE"/>
</dbReference>
<dbReference type="InterPro" id="IPR000257">
    <property type="entry name" value="Uroporphyrinogen_deCOase"/>
</dbReference>
<dbReference type="NCBIfam" id="TIGR01464">
    <property type="entry name" value="hemE"/>
    <property type="match status" value="1"/>
</dbReference>
<dbReference type="PANTHER" id="PTHR21091">
    <property type="entry name" value="METHYLTETRAHYDROFOLATE:HOMOCYSTEINE METHYLTRANSFERASE RELATED"/>
    <property type="match status" value="1"/>
</dbReference>
<dbReference type="PANTHER" id="PTHR21091:SF169">
    <property type="entry name" value="UROPORPHYRINOGEN DECARBOXYLASE"/>
    <property type="match status" value="1"/>
</dbReference>
<dbReference type="Pfam" id="PF01208">
    <property type="entry name" value="URO-D"/>
    <property type="match status" value="1"/>
</dbReference>
<dbReference type="SUPFAM" id="SSF51726">
    <property type="entry name" value="UROD/MetE-like"/>
    <property type="match status" value="1"/>
</dbReference>
<dbReference type="PROSITE" id="PS00906">
    <property type="entry name" value="UROD_1"/>
    <property type="match status" value="1"/>
</dbReference>
<dbReference type="PROSITE" id="PS00907">
    <property type="entry name" value="UROD_2"/>
    <property type="match status" value="1"/>
</dbReference>
<sequence>MTKITNDLFLKAARKEQVDRIPVWYMRQAGRSQPEYRKLKEKYSLFEITHQPEICAYVTKLPVDQYGVDAAILYKDIMTPLPGMGVDVEIKSGIGPVIHNPIRSFQDVEKLTIFKPEIEVPYVLDTIKLLADDMLDVPLIGFAGAPFTLASYMIEGGPSKNYHQTKSFMYREPEVWAILMEKLGRMTANYLIAQINAGASAVQLFDSWVGALSRADYAEYIRPVIEMIVREVKAVHPTTPIIMQAVGASHLLEEWETMPLDVVGVDWRETITSARKKVPTKAIQGNLDPSTLLAPEKCLKEANRILQEGVLEPGYIFNLGHGVFPEVPPEMLKQLTNYIHERSEILLKKDDIK</sequence>
<accession>Q8Y564</accession>
<feature type="chain" id="PRO_0000187613" description="Uroporphyrinogen decarboxylase">
    <location>
        <begin position="1"/>
        <end position="353"/>
    </location>
</feature>
<feature type="binding site" evidence="1">
    <location>
        <begin position="27"/>
        <end position="31"/>
    </location>
    <ligand>
        <name>substrate</name>
    </ligand>
</feature>
<feature type="binding site" evidence="1">
    <location>
        <position position="46"/>
    </location>
    <ligand>
        <name>substrate</name>
    </ligand>
</feature>
<feature type="binding site" evidence="1">
    <location>
        <position position="76"/>
    </location>
    <ligand>
        <name>substrate</name>
    </ligand>
</feature>
<feature type="binding site" evidence="1">
    <location>
        <position position="152"/>
    </location>
    <ligand>
        <name>substrate</name>
    </ligand>
</feature>
<feature type="binding site" evidence="1">
    <location>
        <position position="207"/>
    </location>
    <ligand>
        <name>substrate</name>
    </ligand>
</feature>
<feature type="binding site" evidence="1">
    <location>
        <position position="321"/>
    </location>
    <ligand>
        <name>substrate</name>
    </ligand>
</feature>
<feature type="site" description="Transition state stabilizer" evidence="1">
    <location>
        <position position="76"/>
    </location>
</feature>
<comment type="function">
    <text evidence="1">Catalyzes the decarboxylation of four acetate groups of uroporphyrinogen-III to yield coproporphyrinogen-III.</text>
</comment>
<comment type="catalytic activity">
    <reaction evidence="1">
        <text>uroporphyrinogen III + 4 H(+) = coproporphyrinogen III + 4 CO2</text>
        <dbReference type="Rhea" id="RHEA:19865"/>
        <dbReference type="ChEBI" id="CHEBI:15378"/>
        <dbReference type="ChEBI" id="CHEBI:16526"/>
        <dbReference type="ChEBI" id="CHEBI:57308"/>
        <dbReference type="ChEBI" id="CHEBI:57309"/>
        <dbReference type="EC" id="4.1.1.37"/>
    </reaction>
</comment>
<comment type="pathway">
    <text evidence="1">Porphyrin-containing compound metabolism; protoporphyrin-IX biosynthesis; coproporphyrinogen-III from 5-aminolevulinate: step 4/4.</text>
</comment>
<comment type="subunit">
    <text evidence="1">Homodimer.</text>
</comment>
<comment type="subcellular location">
    <subcellularLocation>
        <location evidence="1">Cytoplasm</location>
    </subcellularLocation>
</comment>
<comment type="similarity">
    <text evidence="1">Belongs to the uroporphyrinogen decarboxylase family.</text>
</comment>
<reference key="1">
    <citation type="journal article" date="2001" name="Science">
        <title>Comparative genomics of Listeria species.</title>
        <authorList>
            <person name="Glaser P."/>
            <person name="Frangeul L."/>
            <person name="Buchrieser C."/>
            <person name="Rusniok C."/>
            <person name="Amend A."/>
            <person name="Baquero F."/>
            <person name="Berche P."/>
            <person name="Bloecker H."/>
            <person name="Brandt P."/>
            <person name="Chakraborty T."/>
            <person name="Charbit A."/>
            <person name="Chetouani F."/>
            <person name="Couve E."/>
            <person name="de Daruvar A."/>
            <person name="Dehoux P."/>
            <person name="Domann E."/>
            <person name="Dominguez-Bernal G."/>
            <person name="Duchaud E."/>
            <person name="Durant L."/>
            <person name="Dussurget O."/>
            <person name="Entian K.-D."/>
            <person name="Fsihi H."/>
            <person name="Garcia-del Portillo F."/>
            <person name="Garrido P."/>
            <person name="Gautier L."/>
            <person name="Goebel W."/>
            <person name="Gomez-Lopez N."/>
            <person name="Hain T."/>
            <person name="Hauf J."/>
            <person name="Jackson D."/>
            <person name="Jones L.-M."/>
            <person name="Kaerst U."/>
            <person name="Kreft J."/>
            <person name="Kuhn M."/>
            <person name="Kunst F."/>
            <person name="Kurapkat G."/>
            <person name="Madueno E."/>
            <person name="Maitournam A."/>
            <person name="Mata Vicente J."/>
            <person name="Ng E."/>
            <person name="Nedjari H."/>
            <person name="Nordsiek G."/>
            <person name="Novella S."/>
            <person name="de Pablos B."/>
            <person name="Perez-Diaz J.-C."/>
            <person name="Purcell R."/>
            <person name="Remmel B."/>
            <person name="Rose M."/>
            <person name="Schlueter T."/>
            <person name="Simoes N."/>
            <person name="Tierrez A."/>
            <person name="Vazquez-Boland J.-A."/>
            <person name="Voss H."/>
            <person name="Wehland J."/>
            <person name="Cossart P."/>
        </authorList>
    </citation>
    <scope>NUCLEOTIDE SEQUENCE [LARGE SCALE GENOMIC DNA]</scope>
    <source>
        <strain>ATCC BAA-679 / EGD-e</strain>
    </source>
</reference>
<proteinExistence type="inferred from homology"/>